<reference key="1">
    <citation type="journal article" date="1995" name="Proc. Natl. Acad. Sci. U.S.A.">
        <title>Cell cycle-regulated nuclear import and export of Cdc47, a protein essential for initiation of DNA replication in budding yeast.</title>
        <authorList>
            <person name="Dalton S."/>
            <person name="Whitbread L."/>
        </authorList>
    </citation>
    <scope>NUCLEOTIDE SEQUENCE [GENOMIC DNA]</scope>
</reference>
<reference key="2">
    <citation type="journal article" date="1993" name="Yeast">
        <title>A 12.8 kb segment, on the right arm of chromosome II from Saccharomyces cerevisiae including part of the DUR1,2 gene, contains five putative new genes.</title>
        <authorList>
            <person name="Bussereau F."/>
            <person name="Mallet L."/>
            <person name="Gaillon L."/>
            <person name="Jacquet M."/>
        </authorList>
    </citation>
    <scope>NUCLEOTIDE SEQUENCE [GENOMIC DNA]</scope>
    <source>
        <strain>ATCC 204508 / S288c</strain>
    </source>
</reference>
<reference key="3">
    <citation type="journal article" date="1994" name="EMBO J.">
        <title>Complete DNA sequence of yeast chromosome II.</title>
        <authorList>
            <person name="Feldmann H."/>
            <person name="Aigle M."/>
            <person name="Aljinovic G."/>
            <person name="Andre B."/>
            <person name="Baclet M.C."/>
            <person name="Barthe C."/>
            <person name="Baur A."/>
            <person name="Becam A.-M."/>
            <person name="Biteau N."/>
            <person name="Boles E."/>
            <person name="Brandt T."/>
            <person name="Brendel M."/>
            <person name="Brueckner M."/>
            <person name="Bussereau F."/>
            <person name="Christiansen C."/>
            <person name="Contreras R."/>
            <person name="Crouzet M."/>
            <person name="Cziepluch C."/>
            <person name="Demolis N."/>
            <person name="Delaveau T."/>
            <person name="Doignon F."/>
            <person name="Domdey H."/>
            <person name="Duesterhus S."/>
            <person name="Dubois E."/>
            <person name="Dujon B."/>
            <person name="El Bakkoury M."/>
            <person name="Entian K.-D."/>
            <person name="Feuermann M."/>
            <person name="Fiers W."/>
            <person name="Fobo G.M."/>
            <person name="Fritz C."/>
            <person name="Gassenhuber J."/>
            <person name="Glansdorff N."/>
            <person name="Goffeau A."/>
            <person name="Grivell L.A."/>
            <person name="de Haan M."/>
            <person name="Hein C."/>
            <person name="Herbert C.J."/>
            <person name="Hollenberg C.P."/>
            <person name="Holmstroem K."/>
            <person name="Jacq C."/>
            <person name="Jacquet M."/>
            <person name="Jauniaux J.-C."/>
            <person name="Jonniaux J.-L."/>
            <person name="Kallesoee T."/>
            <person name="Kiesau P."/>
            <person name="Kirchrath L."/>
            <person name="Koetter P."/>
            <person name="Korol S."/>
            <person name="Liebl S."/>
            <person name="Logghe M."/>
            <person name="Lohan A.J.E."/>
            <person name="Louis E.J."/>
            <person name="Li Z.Y."/>
            <person name="Maat M.J."/>
            <person name="Mallet L."/>
            <person name="Mannhaupt G."/>
            <person name="Messenguy F."/>
            <person name="Miosga T."/>
            <person name="Molemans F."/>
            <person name="Mueller S."/>
            <person name="Nasr F."/>
            <person name="Obermaier B."/>
            <person name="Perea J."/>
            <person name="Pierard A."/>
            <person name="Piravandi E."/>
            <person name="Pohl F.M."/>
            <person name="Pohl T.M."/>
            <person name="Potier S."/>
            <person name="Proft M."/>
            <person name="Purnelle B."/>
            <person name="Ramezani Rad M."/>
            <person name="Rieger M."/>
            <person name="Rose M."/>
            <person name="Schaaff-Gerstenschlaeger I."/>
            <person name="Scherens B."/>
            <person name="Schwarzlose C."/>
            <person name="Skala J."/>
            <person name="Slonimski P.P."/>
            <person name="Smits P.H.M."/>
            <person name="Souciet J.-L."/>
            <person name="Steensma H.Y."/>
            <person name="Stucka R."/>
            <person name="Urrestarazu L.A."/>
            <person name="van der Aart Q.J.M."/>
            <person name="Van Dyck L."/>
            <person name="Vassarotti A."/>
            <person name="Vetter I."/>
            <person name="Vierendeels F."/>
            <person name="Vissers S."/>
            <person name="Wagner G."/>
            <person name="de Wergifosse P."/>
            <person name="Wolfe K.H."/>
            <person name="Zagulski M."/>
            <person name="Zimmermann F.K."/>
            <person name="Mewes H.-W."/>
            <person name="Kleine K."/>
        </authorList>
    </citation>
    <scope>NUCLEOTIDE SEQUENCE [LARGE SCALE GENOMIC DNA]</scope>
    <source>
        <strain>ATCC 204508 / S288c</strain>
    </source>
</reference>
<reference key="4">
    <citation type="journal article" date="2014" name="G3 (Bethesda)">
        <title>The reference genome sequence of Saccharomyces cerevisiae: Then and now.</title>
        <authorList>
            <person name="Engel S.R."/>
            <person name="Dietrich F.S."/>
            <person name="Fisk D.G."/>
            <person name="Binkley G."/>
            <person name="Balakrishnan R."/>
            <person name="Costanzo M.C."/>
            <person name="Dwight S.S."/>
            <person name="Hitz B.C."/>
            <person name="Karra K."/>
            <person name="Nash R.S."/>
            <person name="Weng S."/>
            <person name="Wong E.D."/>
            <person name="Lloyd P."/>
            <person name="Skrzypek M.S."/>
            <person name="Miyasato S.R."/>
            <person name="Simison M."/>
            <person name="Cherry J.M."/>
        </authorList>
    </citation>
    <scope>GENOME REANNOTATION</scope>
    <scope>SEQUENCE REVISION TO 552; 556-558 AND 574</scope>
    <source>
        <strain>ATCC 204508 / S288c</strain>
    </source>
</reference>
<reference key="5">
    <citation type="journal article" date="2007" name="J. Proteome Res.">
        <title>Large-scale phosphorylation analysis of alpha-factor-arrested Saccharomyces cerevisiae.</title>
        <authorList>
            <person name="Li X."/>
            <person name="Gerber S.A."/>
            <person name="Rudner A.D."/>
            <person name="Beausoleil S.A."/>
            <person name="Haas W."/>
            <person name="Villen J."/>
            <person name="Elias J.E."/>
            <person name="Gygi S.P."/>
        </authorList>
    </citation>
    <scope>PHOSPHORYLATION [LARGE SCALE ANALYSIS] AT THR-811</scope>
    <scope>IDENTIFICATION BY MASS SPECTROMETRY [LARGE SCALE ANALYSIS]</scope>
    <source>
        <strain>ADR376</strain>
    </source>
</reference>
<reference key="6">
    <citation type="journal article" date="2008" name="Mol. Cell">
        <title>The Mcm2-7 complex has in vitro helicase activity.</title>
        <authorList>
            <person name="Bochman M.L."/>
            <person name="Schwacha A."/>
        </authorList>
    </citation>
    <scope>RECONSTITUTION OF THE MCM2-7 COMPLEX</scope>
    <scope>HELICASE ACTIVITY OF THE MCM2-7 COMPLEX</scope>
    <scope>MUTAGENESIS OF LYS-466</scope>
</reference>
<reference key="7">
    <citation type="journal article" date="2008" name="Mol. Cell. Proteomics">
        <title>A multidimensional chromatography technology for in-depth phosphoproteome analysis.</title>
        <authorList>
            <person name="Albuquerque C.P."/>
            <person name="Smolka M.B."/>
            <person name="Payne S.H."/>
            <person name="Bafna V."/>
            <person name="Eng J."/>
            <person name="Zhou H."/>
        </authorList>
    </citation>
    <scope>PHOSPHORYLATION [LARGE SCALE ANALYSIS] AT THR-811 AND SER-819</scope>
    <scope>IDENTIFICATION BY MASS SPECTROMETRY [LARGE SCALE ANALYSIS]</scope>
</reference>
<reference key="8">
    <citation type="journal article" date="2009" name="Cell">
        <title>Concerted loading of Mcm2-7 double hexamers around DNA during DNA replication origin licensing.</title>
        <authorList>
            <person name="Remus D."/>
            <person name="Beuron F."/>
            <person name="Tolun G."/>
            <person name="Griffith J.D."/>
            <person name="Morris E.P."/>
            <person name="Diffley J.F."/>
        </authorList>
    </citation>
    <scope>IDENTIFICATION IN THE MCM2-7 COMPLEX</scope>
    <scope>FUNCTION OF THE MCM2-7 COMPLEX</scope>
    <scope>ELECTRON MICROSCOPY OF THE MCM2-7 COMPLEX</scope>
</reference>
<reference key="9">
    <citation type="journal article" date="2009" name="Proc. Natl. Acad. Sci. U.S.A.">
        <title>A double-hexameric MCM2-7 complex is loaded onto origin DNA during licensing of eukaryotic DNA replication.</title>
        <authorList>
            <person name="Evrin C."/>
            <person name="Clarke P."/>
            <person name="Zech J."/>
            <person name="Lurz R."/>
            <person name="Sun J."/>
            <person name="Uhle S."/>
            <person name="Li H."/>
            <person name="Stillman B."/>
            <person name="Speck C."/>
        </authorList>
    </citation>
    <scope>IDENTIFICATION IN THE MCM2-7 COMPLEX</scope>
    <scope>FUNCTION OF THE MCM2-7 COMPLEX</scope>
    <scope>ELECTRON MICROSCOPY OF THE MCM2-7 COMPLEX</scope>
</reference>
<reference key="10">
    <citation type="journal article" date="1997" name="Mol. Cell. Biol.">
        <title>A lesion in the DNA replication initiation factor Mcm10 induces pausing of elongation forks through chromosomal replication origins in Saccharomyces cerevisiae.</title>
        <authorList>
            <person name="Merchant A.M."/>
            <person name="Kawasaki Y."/>
            <person name="Chen Y."/>
            <person name="Lei M."/>
            <person name="Tye B.K."/>
        </authorList>
    </citation>
    <scope>INTERACTION WITH MCM10</scope>
</reference>
<reference key="11">
    <citation type="journal article" date="2003" name="Nature">
        <title>Global analysis of protein localization in budding yeast.</title>
        <authorList>
            <person name="Huh W.-K."/>
            <person name="Falvo J.V."/>
            <person name="Gerke L.C."/>
            <person name="Carroll A.S."/>
            <person name="Howson R.W."/>
            <person name="Weissman J.S."/>
            <person name="O'Shea E.K."/>
        </authorList>
    </citation>
    <scope>SUBCELLULAR LOCATION [LARGE SCALE ANALYSIS]</scope>
</reference>
<reference key="12">
    <citation type="journal article" date="2003" name="Nature">
        <title>Global analysis of protein expression in yeast.</title>
        <authorList>
            <person name="Ghaemmaghami S."/>
            <person name="Huh W.-K."/>
            <person name="Bower K."/>
            <person name="Howson R.W."/>
            <person name="Belle A."/>
            <person name="Dephoure N."/>
            <person name="O'Shea E.K."/>
            <person name="Weissman J.S."/>
        </authorList>
    </citation>
    <scope>LEVEL OF PROTEIN EXPRESSION [LARGE SCALE ANALYSIS]</scope>
</reference>
<reference key="13">
    <citation type="journal article" date="2004" name="Exp. Cell Res.">
        <title>Saccharomyces cerevisiae CSM1 gene encoding a protein influencing chromosome segregation in meiosis I interacts with elements of the DNA replication complex.</title>
        <authorList>
            <person name="Wysocka M."/>
            <person name="Rytka J."/>
            <person name="Kurlandzka A."/>
        </authorList>
    </citation>
    <scope>INTERACTION WITH CSM1</scope>
</reference>
<reference key="14">
    <citation type="journal article" date="2009" name="Science">
        <title>Global analysis of Cdk1 substrate phosphorylation sites provides insights into evolution.</title>
        <authorList>
            <person name="Holt L.J."/>
            <person name="Tuch B.B."/>
            <person name="Villen J."/>
            <person name="Johnson A.D."/>
            <person name="Gygi S.P."/>
            <person name="Morgan D.O."/>
        </authorList>
    </citation>
    <scope>PHOSPHORYLATION [LARGE SCALE ANALYSIS] AT SER-838</scope>
    <scope>IDENTIFICATION BY MASS SPECTROMETRY [LARGE SCALE ANALYSIS]</scope>
</reference>
<keyword id="KW-0002">3D-structure</keyword>
<keyword id="KW-0067">ATP-binding</keyword>
<keyword id="KW-0131">Cell cycle</keyword>
<keyword id="KW-0963">Cytoplasm</keyword>
<keyword id="KW-0235">DNA replication</keyword>
<keyword id="KW-0238">DNA-binding</keyword>
<keyword id="KW-0347">Helicase</keyword>
<keyword id="KW-0378">Hydrolase</keyword>
<keyword id="KW-0547">Nucleotide-binding</keyword>
<keyword id="KW-0539">Nucleus</keyword>
<keyword id="KW-0597">Phosphoprotein</keyword>
<keyword id="KW-1185">Reference proteome</keyword>
<gene>
    <name type="primary">MCM7</name>
    <name type="synonym">CDC47</name>
    <name type="ordered locus">YBR202W</name>
    <name type="ORF">YBR1441</name>
</gene>
<protein>
    <recommendedName>
        <fullName>DNA replication licensing factor MCM7</fullName>
        <ecNumber>3.6.4.12</ecNumber>
    </recommendedName>
    <alternativeName>
        <fullName>Cell division control protein 47</fullName>
    </alternativeName>
    <alternativeName>
        <fullName>Minichromosome maintenance protein 7</fullName>
    </alternativeName>
</protein>
<dbReference type="EC" id="3.6.4.12"/>
<dbReference type="EMBL" id="U14730">
    <property type="protein sequence ID" value="AAA86309.1"/>
    <property type="molecule type" value="Genomic_DNA"/>
</dbReference>
<dbReference type="EMBL" id="Z21487">
    <property type="protein sequence ID" value="CAA79689.1"/>
    <property type="molecule type" value="Genomic_DNA"/>
</dbReference>
<dbReference type="EMBL" id="Z36071">
    <property type="protein sequence ID" value="CAA85166.1"/>
    <property type="molecule type" value="Genomic_DNA"/>
</dbReference>
<dbReference type="EMBL" id="BK006936">
    <property type="protein sequence ID" value="DAA07320.2"/>
    <property type="molecule type" value="Genomic_DNA"/>
</dbReference>
<dbReference type="PIR" id="S34027">
    <property type="entry name" value="S34027"/>
</dbReference>
<dbReference type="RefSeq" id="NP_009761.4">
    <property type="nucleotide sequence ID" value="NM_001178550.4"/>
</dbReference>
<dbReference type="PDB" id="3JA8">
    <property type="method" value="EM"/>
    <property type="resolution" value="3.80 A"/>
    <property type="chains" value="7=1-845"/>
</dbReference>
<dbReference type="PDB" id="3JC5">
    <property type="method" value="EM"/>
    <property type="resolution" value="4.70 A"/>
    <property type="chains" value="7=1-845"/>
</dbReference>
<dbReference type="PDB" id="3JC6">
    <property type="method" value="EM"/>
    <property type="resolution" value="3.70 A"/>
    <property type="chains" value="7=1-845"/>
</dbReference>
<dbReference type="PDB" id="3JC7">
    <property type="method" value="EM"/>
    <property type="resolution" value="4.80 A"/>
    <property type="chains" value="7=1-845"/>
</dbReference>
<dbReference type="PDB" id="5BK4">
    <property type="method" value="EM"/>
    <property type="resolution" value="3.90 A"/>
    <property type="chains" value="7/F=1-845"/>
</dbReference>
<dbReference type="PDB" id="5U8S">
    <property type="method" value="EM"/>
    <property type="resolution" value="6.10 A"/>
    <property type="chains" value="7=1-845"/>
</dbReference>
<dbReference type="PDB" id="5U8T">
    <property type="method" value="EM"/>
    <property type="resolution" value="4.90 A"/>
    <property type="chains" value="7=1-845"/>
</dbReference>
<dbReference type="PDB" id="5V8F">
    <property type="method" value="EM"/>
    <property type="resolution" value="3.90 A"/>
    <property type="chains" value="7=1-800"/>
</dbReference>
<dbReference type="PDB" id="5XF8">
    <property type="method" value="EM"/>
    <property type="resolution" value="7.10 A"/>
    <property type="chains" value="7=1-845"/>
</dbReference>
<dbReference type="PDB" id="6EYC">
    <property type="method" value="EM"/>
    <property type="resolution" value="3.80 A"/>
    <property type="chains" value="7=1-845"/>
</dbReference>
<dbReference type="PDB" id="6F0L">
    <property type="method" value="EM"/>
    <property type="resolution" value="4.77 A"/>
    <property type="chains" value="7/F=1-845"/>
</dbReference>
<dbReference type="PDB" id="6HV9">
    <property type="method" value="EM"/>
    <property type="resolution" value="4.98 A"/>
    <property type="chains" value="7=1-845"/>
</dbReference>
<dbReference type="PDB" id="6PTJ">
    <property type="method" value="EM"/>
    <property type="resolution" value="3.80 A"/>
    <property type="chains" value="7=1-845"/>
</dbReference>
<dbReference type="PDB" id="6PTN">
    <property type="method" value="EM"/>
    <property type="resolution" value="5.80 A"/>
    <property type="chains" value="7/n=1-845"/>
</dbReference>
<dbReference type="PDB" id="6PTO">
    <property type="method" value="EM"/>
    <property type="resolution" value="7.00 A"/>
    <property type="chains" value="7/K/m=1-845"/>
</dbReference>
<dbReference type="PDB" id="6RQC">
    <property type="method" value="EM"/>
    <property type="resolution" value="4.40 A"/>
    <property type="chains" value="7=1-845"/>
</dbReference>
<dbReference type="PDB" id="6SKL">
    <property type="method" value="EM"/>
    <property type="resolution" value="3.70 A"/>
    <property type="chains" value="7=1-845"/>
</dbReference>
<dbReference type="PDB" id="6SKO">
    <property type="method" value="EM"/>
    <property type="resolution" value="3.40 A"/>
    <property type="chains" value="7=1-845"/>
</dbReference>
<dbReference type="PDB" id="6U0M">
    <property type="method" value="EM"/>
    <property type="resolution" value="3.90 A"/>
    <property type="chains" value="7=1-729"/>
</dbReference>
<dbReference type="PDB" id="6WGC">
    <property type="method" value="EM"/>
    <property type="resolution" value="4.30 A"/>
    <property type="chains" value="7=1-845"/>
</dbReference>
<dbReference type="PDB" id="6WGF">
    <property type="method" value="EM"/>
    <property type="resolution" value="7.70 A"/>
    <property type="chains" value="7=1-845"/>
</dbReference>
<dbReference type="PDB" id="6WGG">
    <property type="method" value="EM"/>
    <property type="resolution" value="8.10 A"/>
    <property type="chains" value="7=1-845"/>
</dbReference>
<dbReference type="PDB" id="6WGI">
    <property type="method" value="EM"/>
    <property type="resolution" value="10.00 A"/>
    <property type="chains" value="7=1-845"/>
</dbReference>
<dbReference type="PDB" id="7P30">
    <property type="method" value="EM"/>
    <property type="resolution" value="3.00 A"/>
    <property type="chains" value="7/F=1-845"/>
</dbReference>
<dbReference type="PDB" id="7P5Z">
    <property type="method" value="EM"/>
    <property type="resolution" value="3.30 A"/>
    <property type="chains" value="7/F=1-845"/>
</dbReference>
<dbReference type="PDB" id="7PMK">
    <property type="method" value="EM"/>
    <property type="resolution" value="3.20 A"/>
    <property type="chains" value="7=1-845"/>
</dbReference>
<dbReference type="PDB" id="7PMN">
    <property type="method" value="EM"/>
    <property type="resolution" value="3.20 A"/>
    <property type="chains" value="7=1-845"/>
</dbReference>
<dbReference type="PDB" id="7PT6">
    <property type="method" value="EM"/>
    <property type="resolution" value="3.20 A"/>
    <property type="chains" value="7/G=1-845"/>
</dbReference>
<dbReference type="PDB" id="7PT7">
    <property type="method" value="EM"/>
    <property type="resolution" value="3.80 A"/>
    <property type="chains" value="7/G=1-845"/>
</dbReference>
<dbReference type="PDB" id="7QHS">
    <property type="method" value="EM"/>
    <property type="resolution" value="3.30 A"/>
    <property type="chains" value="7=1-845"/>
</dbReference>
<dbReference type="PDB" id="7V3U">
    <property type="method" value="EM"/>
    <property type="resolution" value="3.20 A"/>
    <property type="chains" value="7/G=1-845"/>
</dbReference>
<dbReference type="PDB" id="7V3V">
    <property type="method" value="EM"/>
    <property type="resolution" value="2.90 A"/>
    <property type="chains" value="7/G=1-845"/>
</dbReference>
<dbReference type="PDB" id="7W8G">
    <property type="method" value="EM"/>
    <property type="resolution" value="2.52 A"/>
    <property type="chains" value="7/G=1-845"/>
</dbReference>
<dbReference type="PDB" id="8B9A">
    <property type="method" value="EM"/>
    <property type="resolution" value="3.50 A"/>
    <property type="chains" value="7=1-845"/>
</dbReference>
<dbReference type="PDB" id="8B9B">
    <property type="method" value="EM"/>
    <property type="resolution" value="3.50 A"/>
    <property type="chains" value="7=1-845"/>
</dbReference>
<dbReference type="PDB" id="8B9C">
    <property type="method" value="EM"/>
    <property type="resolution" value="4.60 A"/>
    <property type="chains" value="7=1-845"/>
</dbReference>
<dbReference type="PDB" id="8KG6">
    <property type="method" value="EM"/>
    <property type="resolution" value="3.07 A"/>
    <property type="chains" value="7=1-845"/>
</dbReference>
<dbReference type="PDB" id="8KG8">
    <property type="method" value="EM"/>
    <property type="resolution" value="4.23 A"/>
    <property type="chains" value="7=1-845"/>
</dbReference>
<dbReference type="PDB" id="8KG9">
    <property type="method" value="EM"/>
    <property type="resolution" value="4.52 A"/>
    <property type="chains" value="7=1-845"/>
</dbReference>
<dbReference type="PDB" id="8P5E">
    <property type="method" value="EM"/>
    <property type="resolution" value="3.90 A"/>
    <property type="chains" value="7=1-845"/>
</dbReference>
<dbReference type="PDB" id="8P62">
    <property type="method" value="EM"/>
    <property type="resolution" value="3.90 A"/>
    <property type="chains" value="7=1-845"/>
</dbReference>
<dbReference type="PDB" id="8P63">
    <property type="method" value="EM"/>
    <property type="resolution" value="3.70 A"/>
    <property type="chains" value="7=1-845"/>
</dbReference>
<dbReference type="PDB" id="8RIF">
    <property type="method" value="EM"/>
    <property type="resolution" value="2.79 A"/>
    <property type="chains" value="7/F=1-845"/>
</dbReference>
<dbReference type="PDB" id="8RIG">
    <property type="method" value="EM"/>
    <property type="resolution" value="3.41 A"/>
    <property type="chains" value="7=1-845"/>
</dbReference>
<dbReference type="PDB" id="8W7M">
    <property type="method" value="EM"/>
    <property type="resolution" value="4.12 A"/>
    <property type="chains" value="7=1-845"/>
</dbReference>
<dbReference type="PDB" id="8W7S">
    <property type="method" value="EM"/>
    <property type="resolution" value="7.39 A"/>
    <property type="chains" value="7=1-845"/>
</dbReference>
<dbReference type="PDB" id="8XGC">
    <property type="method" value="EM"/>
    <property type="resolution" value="3.70 A"/>
    <property type="chains" value="7=1-845"/>
</dbReference>
<dbReference type="PDB" id="9BCX">
    <property type="method" value="EM"/>
    <property type="resolution" value="6.10 A"/>
    <property type="chains" value="7=1-845"/>
</dbReference>
<dbReference type="PDB" id="9GJP">
    <property type="method" value="EM"/>
    <property type="resolution" value="3.40 A"/>
    <property type="chains" value="7=1-845"/>
</dbReference>
<dbReference type="PDB" id="9GJW">
    <property type="method" value="EM"/>
    <property type="resolution" value="3.30 A"/>
    <property type="chains" value="7=1-845"/>
</dbReference>
<dbReference type="PDB" id="9GM5">
    <property type="method" value="EM"/>
    <property type="resolution" value="3.70 A"/>
    <property type="chains" value="7=1-845"/>
</dbReference>
<dbReference type="PDBsum" id="3JA8"/>
<dbReference type="PDBsum" id="3JC5"/>
<dbReference type="PDBsum" id="3JC6"/>
<dbReference type="PDBsum" id="3JC7"/>
<dbReference type="PDBsum" id="5BK4"/>
<dbReference type="PDBsum" id="5U8S"/>
<dbReference type="PDBsum" id="5U8T"/>
<dbReference type="PDBsum" id="5V8F"/>
<dbReference type="PDBsum" id="5XF8"/>
<dbReference type="PDBsum" id="6EYC"/>
<dbReference type="PDBsum" id="6F0L"/>
<dbReference type="PDBsum" id="6HV9"/>
<dbReference type="PDBsum" id="6PTJ"/>
<dbReference type="PDBsum" id="6PTN"/>
<dbReference type="PDBsum" id="6PTO"/>
<dbReference type="PDBsum" id="6RQC"/>
<dbReference type="PDBsum" id="6SKL"/>
<dbReference type="PDBsum" id="6SKO"/>
<dbReference type="PDBsum" id="6U0M"/>
<dbReference type="PDBsum" id="6WGC"/>
<dbReference type="PDBsum" id="6WGF"/>
<dbReference type="PDBsum" id="6WGG"/>
<dbReference type="PDBsum" id="6WGI"/>
<dbReference type="PDBsum" id="7P30"/>
<dbReference type="PDBsum" id="7P5Z"/>
<dbReference type="PDBsum" id="7PMK"/>
<dbReference type="PDBsum" id="7PMN"/>
<dbReference type="PDBsum" id="7PT6"/>
<dbReference type="PDBsum" id="7PT7"/>
<dbReference type="PDBsum" id="7QHS"/>
<dbReference type="PDBsum" id="7V3U"/>
<dbReference type="PDBsum" id="7V3V"/>
<dbReference type="PDBsum" id="7W8G"/>
<dbReference type="PDBsum" id="8B9A"/>
<dbReference type="PDBsum" id="8B9B"/>
<dbReference type="PDBsum" id="8B9C"/>
<dbReference type="PDBsum" id="8KG6"/>
<dbReference type="PDBsum" id="8KG8"/>
<dbReference type="PDBsum" id="8KG9"/>
<dbReference type="PDBsum" id="8P5E"/>
<dbReference type="PDBsum" id="8P62"/>
<dbReference type="PDBsum" id="8P63"/>
<dbReference type="PDBsum" id="8RIF"/>
<dbReference type="PDBsum" id="8RIG"/>
<dbReference type="PDBsum" id="8W7M"/>
<dbReference type="PDBsum" id="8W7S"/>
<dbReference type="PDBsum" id="8XGC"/>
<dbReference type="PDBsum" id="9BCX"/>
<dbReference type="PDBsum" id="9GJP"/>
<dbReference type="PDBsum" id="9GJW"/>
<dbReference type="PDBsum" id="9GM5"/>
<dbReference type="EMDB" id="EMD-0288"/>
<dbReference type="EMDB" id="EMD-10227"/>
<dbReference type="EMDB" id="EMD-10230"/>
<dbReference type="EMDB" id="EMD-13176"/>
<dbReference type="EMDB" id="EMD-13211"/>
<dbReference type="EMDB" id="EMD-13539"/>
<dbReference type="EMDB" id="EMD-13619"/>
<dbReference type="EMDB" id="EMD-13620"/>
<dbReference type="EMDB" id="EMD-13624"/>
<dbReference type="EMDB" id="EMD-13629"/>
<dbReference type="EMDB" id="EMD-13640"/>
<dbReference type="EMDB" id="EMD-13644"/>
<dbReference type="EMDB" id="EMD-13647"/>
<dbReference type="EMDB" id="EMD-13648"/>
<dbReference type="EMDB" id="EMD-13656"/>
<dbReference type="EMDB" id="EMD-13978"/>
<dbReference type="EMDB" id="EMD-15924"/>
<dbReference type="EMDB" id="EMD-17449"/>
<dbReference type="EMDB" id="EMD-17458"/>
<dbReference type="EMDB" id="EMD-17459"/>
<dbReference type="EMDB" id="EMD-19186"/>
<dbReference type="EMDB" id="EMD-19187"/>
<dbReference type="EMDB" id="EMD-20471"/>
<dbReference type="EMDB" id="EMD-20472"/>
<dbReference type="EMDB" id="EMD-20473"/>
<dbReference type="EMDB" id="EMD-20607"/>
<dbReference type="EMDB" id="EMD-21662"/>
<dbReference type="EMDB" id="EMD-21664"/>
<dbReference type="EMDB" id="EMD-21665"/>
<dbReference type="EMDB" id="EMD-21666"/>
<dbReference type="EMDB" id="EMD-31684"/>
<dbReference type="EMDB" id="EMD-31685"/>
<dbReference type="EMDB" id="EMD-32355"/>
<dbReference type="EMDB" id="EMD-37211"/>
<dbReference type="EMDB" id="EMD-37213"/>
<dbReference type="EMDB" id="EMD-37345"/>
<dbReference type="EMDB" id="EMD-44441"/>
<dbReference type="EMDB" id="EMD-4980"/>
<dbReference type="EMDB" id="EMD-51401"/>
<dbReference type="EMDB" id="EMD-51407"/>
<dbReference type="EMDB" id="EMD-51441"/>
<dbReference type="EMDB" id="EMD-6671"/>
<dbReference type="EMDB" id="EMD-8518"/>
<dbReference type="EMDB" id="EMD-8519"/>
<dbReference type="EMDB" id="EMD-8540"/>
<dbReference type="EMDB" id="EMD-9400"/>
<dbReference type="SMR" id="P38132"/>
<dbReference type="BioGRID" id="32899">
    <property type="interactions" value="417"/>
</dbReference>
<dbReference type="ComplexPortal" id="CPX-2944">
    <property type="entry name" value="MCM complex"/>
</dbReference>
<dbReference type="DIP" id="DIP-2408N"/>
<dbReference type="FunCoup" id="P38132">
    <property type="interactions" value="1285"/>
</dbReference>
<dbReference type="IntAct" id="P38132">
    <property type="interactions" value="25"/>
</dbReference>
<dbReference type="MINT" id="P38132"/>
<dbReference type="STRING" id="4932.YBR202W"/>
<dbReference type="iPTMnet" id="P38132"/>
<dbReference type="PaxDb" id="4932-YBR202W"/>
<dbReference type="PeptideAtlas" id="P38132"/>
<dbReference type="EnsemblFungi" id="YBR202W_mRNA">
    <property type="protein sequence ID" value="YBR202W"/>
    <property type="gene ID" value="YBR202W"/>
</dbReference>
<dbReference type="GeneID" id="852501"/>
<dbReference type="KEGG" id="sce:YBR202W"/>
<dbReference type="AGR" id="SGD:S000000406"/>
<dbReference type="SGD" id="S000000406">
    <property type="gene designation" value="MCM7"/>
</dbReference>
<dbReference type="VEuPathDB" id="FungiDB:YBR202W"/>
<dbReference type="eggNOG" id="KOG0482">
    <property type="taxonomic scope" value="Eukaryota"/>
</dbReference>
<dbReference type="GeneTree" id="ENSGT01050000244824"/>
<dbReference type="HOGENOM" id="CLU_000995_7_2_1"/>
<dbReference type="InParanoid" id="P38132"/>
<dbReference type="OMA" id="AQHVTYV"/>
<dbReference type="OrthoDB" id="3207464at2759"/>
<dbReference type="BioCyc" id="YEAST:G3O-29143-MONOMER"/>
<dbReference type="Reactome" id="R-SCE-176187">
    <property type="pathway name" value="Activation of ATR in response to replication stress"/>
</dbReference>
<dbReference type="Reactome" id="R-SCE-68867">
    <property type="pathway name" value="Assembly of the pre-replicative complex"/>
</dbReference>
<dbReference type="Reactome" id="R-SCE-68962">
    <property type="pathway name" value="Activation of the pre-replicative complex"/>
</dbReference>
<dbReference type="Reactome" id="R-SCE-69052">
    <property type="pathway name" value="Switching of origins to a post-replicative state"/>
</dbReference>
<dbReference type="BioGRID-ORCS" id="852501">
    <property type="hits" value="0 hits in 10 CRISPR screens"/>
</dbReference>
<dbReference type="CD-CODE" id="E03F929F">
    <property type="entry name" value="Stress granule"/>
</dbReference>
<dbReference type="EvolutionaryTrace" id="P38132"/>
<dbReference type="PRO" id="PR:P38132"/>
<dbReference type="Proteomes" id="UP000002311">
    <property type="component" value="Chromosome II"/>
</dbReference>
<dbReference type="RNAct" id="P38132">
    <property type="molecule type" value="protein"/>
</dbReference>
<dbReference type="GO" id="GO:0000781">
    <property type="term" value="C:chromosome, telomeric region"/>
    <property type="evidence" value="ECO:0007669"/>
    <property type="project" value="GOC"/>
</dbReference>
<dbReference type="GO" id="GO:0071162">
    <property type="term" value="C:CMG complex"/>
    <property type="evidence" value="ECO:0000314"/>
    <property type="project" value="SGD"/>
</dbReference>
<dbReference type="GO" id="GO:0005737">
    <property type="term" value="C:cytoplasm"/>
    <property type="evidence" value="ECO:0000314"/>
    <property type="project" value="SGD"/>
</dbReference>
<dbReference type="GO" id="GO:0031261">
    <property type="term" value="C:DNA replication preinitiation complex"/>
    <property type="evidence" value="ECO:0000314"/>
    <property type="project" value="SGD"/>
</dbReference>
<dbReference type="GO" id="GO:0042555">
    <property type="term" value="C:MCM complex"/>
    <property type="evidence" value="ECO:0000314"/>
    <property type="project" value="SGD"/>
</dbReference>
<dbReference type="GO" id="GO:0097373">
    <property type="term" value="C:MCM core complex"/>
    <property type="evidence" value="ECO:0000314"/>
    <property type="project" value="SGD"/>
</dbReference>
<dbReference type="GO" id="GO:0005656">
    <property type="term" value="C:nuclear pre-replicative complex"/>
    <property type="evidence" value="ECO:0000314"/>
    <property type="project" value="SGD"/>
</dbReference>
<dbReference type="GO" id="GO:0043596">
    <property type="term" value="C:nuclear replication fork"/>
    <property type="evidence" value="ECO:0000314"/>
    <property type="project" value="ComplexPortal"/>
</dbReference>
<dbReference type="GO" id="GO:0005654">
    <property type="term" value="C:nucleoplasm"/>
    <property type="evidence" value="ECO:0000304"/>
    <property type="project" value="Reactome"/>
</dbReference>
<dbReference type="GO" id="GO:0005634">
    <property type="term" value="C:nucleus"/>
    <property type="evidence" value="ECO:0000314"/>
    <property type="project" value="SGD"/>
</dbReference>
<dbReference type="GO" id="GO:0031298">
    <property type="term" value="C:replication fork protection complex"/>
    <property type="evidence" value="ECO:0007669"/>
    <property type="project" value="UniProtKB-ARBA"/>
</dbReference>
<dbReference type="GO" id="GO:0005524">
    <property type="term" value="F:ATP binding"/>
    <property type="evidence" value="ECO:0000314"/>
    <property type="project" value="SGD"/>
</dbReference>
<dbReference type="GO" id="GO:0016887">
    <property type="term" value="F:ATP hydrolysis activity"/>
    <property type="evidence" value="ECO:0007669"/>
    <property type="project" value="InterPro"/>
</dbReference>
<dbReference type="GO" id="GO:0003682">
    <property type="term" value="F:chromatin binding"/>
    <property type="evidence" value="ECO:0000314"/>
    <property type="project" value="SGD"/>
</dbReference>
<dbReference type="GO" id="GO:0003688">
    <property type="term" value="F:DNA replication origin binding"/>
    <property type="evidence" value="ECO:0000314"/>
    <property type="project" value="SGD"/>
</dbReference>
<dbReference type="GO" id="GO:1904931">
    <property type="term" value="F:MCM complex binding"/>
    <property type="evidence" value="ECO:0000314"/>
    <property type="project" value="SGD"/>
</dbReference>
<dbReference type="GO" id="GO:0017116">
    <property type="term" value="F:single-stranded DNA helicase activity"/>
    <property type="evidence" value="ECO:0000314"/>
    <property type="project" value="SGD"/>
</dbReference>
<dbReference type="GO" id="GO:0006260">
    <property type="term" value="P:DNA replication"/>
    <property type="evidence" value="ECO:0000314"/>
    <property type="project" value="SGD"/>
</dbReference>
<dbReference type="GO" id="GO:0006270">
    <property type="term" value="P:DNA replication initiation"/>
    <property type="evidence" value="ECO:0000315"/>
    <property type="project" value="SGD"/>
</dbReference>
<dbReference type="GO" id="GO:0006271">
    <property type="term" value="P:DNA strand elongation involved in DNA replication"/>
    <property type="evidence" value="ECO:0000315"/>
    <property type="project" value="SGD"/>
</dbReference>
<dbReference type="GO" id="GO:0000727">
    <property type="term" value="P:double-strand break repair via break-induced replication"/>
    <property type="evidence" value="ECO:0000315"/>
    <property type="project" value="SGD"/>
</dbReference>
<dbReference type="GO" id="GO:0033260">
    <property type="term" value="P:nuclear DNA replication"/>
    <property type="evidence" value="ECO:0000315"/>
    <property type="project" value="SGD"/>
</dbReference>
<dbReference type="GO" id="GO:0006267">
    <property type="term" value="P:pre-replicative complex assembly involved in nuclear cell cycle DNA replication"/>
    <property type="evidence" value="ECO:0000314"/>
    <property type="project" value="SGD"/>
</dbReference>
<dbReference type="GO" id="GO:0006279">
    <property type="term" value="P:premeiotic DNA replication"/>
    <property type="evidence" value="ECO:0000314"/>
    <property type="project" value="ComplexPortal"/>
</dbReference>
<dbReference type="GO" id="GO:0030466">
    <property type="term" value="P:silent mating-type cassette heterochromatin formation"/>
    <property type="evidence" value="ECO:0000315"/>
    <property type="project" value="SGD"/>
</dbReference>
<dbReference type="GO" id="GO:0031509">
    <property type="term" value="P:subtelomeric heterochromatin formation"/>
    <property type="evidence" value="ECO:0000315"/>
    <property type="project" value="SGD"/>
</dbReference>
<dbReference type="CDD" id="cd17758">
    <property type="entry name" value="MCM7"/>
    <property type="match status" value="1"/>
</dbReference>
<dbReference type="FunFam" id="2.20.28.10:FF:000004">
    <property type="entry name" value="DNA replication licensing factor MCM7"/>
    <property type="match status" value="1"/>
</dbReference>
<dbReference type="FunFam" id="3.40.50.300:FF:000288">
    <property type="entry name" value="DNA replication licensing factor MCM7"/>
    <property type="match status" value="1"/>
</dbReference>
<dbReference type="Gene3D" id="2.20.28.10">
    <property type="match status" value="1"/>
</dbReference>
<dbReference type="Gene3D" id="3.30.1640.10">
    <property type="entry name" value="mini-chromosome maintenance (MCM) complex, chain A, domain 1"/>
    <property type="match status" value="1"/>
</dbReference>
<dbReference type="Gene3D" id="2.40.50.140">
    <property type="entry name" value="Nucleic acid-binding proteins"/>
    <property type="match status" value="1"/>
</dbReference>
<dbReference type="Gene3D" id="3.40.50.300">
    <property type="entry name" value="P-loop containing nucleotide triphosphate hydrolases"/>
    <property type="match status" value="1"/>
</dbReference>
<dbReference type="InterPro" id="IPR003593">
    <property type="entry name" value="AAA+_ATPase"/>
</dbReference>
<dbReference type="InterPro" id="IPR031327">
    <property type="entry name" value="MCM"/>
</dbReference>
<dbReference type="InterPro" id="IPR008050">
    <property type="entry name" value="MCM7"/>
</dbReference>
<dbReference type="InterPro" id="IPR018525">
    <property type="entry name" value="MCM_CS"/>
</dbReference>
<dbReference type="InterPro" id="IPR001208">
    <property type="entry name" value="MCM_dom"/>
</dbReference>
<dbReference type="InterPro" id="IPR041562">
    <property type="entry name" value="MCM_lid"/>
</dbReference>
<dbReference type="InterPro" id="IPR027925">
    <property type="entry name" value="MCM_N"/>
</dbReference>
<dbReference type="InterPro" id="IPR033762">
    <property type="entry name" value="MCM_OB"/>
</dbReference>
<dbReference type="InterPro" id="IPR012340">
    <property type="entry name" value="NA-bd_OB-fold"/>
</dbReference>
<dbReference type="InterPro" id="IPR027417">
    <property type="entry name" value="P-loop_NTPase"/>
</dbReference>
<dbReference type="PANTHER" id="PTHR11630">
    <property type="entry name" value="DNA REPLICATION LICENSING FACTOR MCM FAMILY MEMBER"/>
    <property type="match status" value="1"/>
</dbReference>
<dbReference type="PANTHER" id="PTHR11630:SF26">
    <property type="entry name" value="DNA REPLICATION LICENSING FACTOR MCM7"/>
    <property type="match status" value="1"/>
</dbReference>
<dbReference type="Pfam" id="PF24901">
    <property type="entry name" value="HTH_MCM7"/>
    <property type="match status" value="1"/>
</dbReference>
<dbReference type="Pfam" id="PF00493">
    <property type="entry name" value="MCM"/>
    <property type="match status" value="1"/>
</dbReference>
<dbReference type="Pfam" id="PF17855">
    <property type="entry name" value="MCM_lid"/>
    <property type="match status" value="1"/>
</dbReference>
<dbReference type="Pfam" id="PF14551">
    <property type="entry name" value="MCM_N"/>
    <property type="match status" value="1"/>
</dbReference>
<dbReference type="Pfam" id="PF17207">
    <property type="entry name" value="MCM_OB"/>
    <property type="match status" value="1"/>
</dbReference>
<dbReference type="PRINTS" id="PR01657">
    <property type="entry name" value="MCMFAMILY"/>
</dbReference>
<dbReference type="PRINTS" id="PR01663">
    <property type="entry name" value="MCMPROTEIN7"/>
</dbReference>
<dbReference type="SMART" id="SM00382">
    <property type="entry name" value="AAA"/>
    <property type="match status" value="1"/>
</dbReference>
<dbReference type="SMART" id="SM00350">
    <property type="entry name" value="MCM"/>
    <property type="match status" value="1"/>
</dbReference>
<dbReference type="SUPFAM" id="SSF50249">
    <property type="entry name" value="Nucleic acid-binding proteins"/>
    <property type="match status" value="1"/>
</dbReference>
<dbReference type="SUPFAM" id="SSF52540">
    <property type="entry name" value="P-loop containing nucleoside triphosphate hydrolases"/>
    <property type="match status" value="1"/>
</dbReference>
<dbReference type="PROSITE" id="PS00847">
    <property type="entry name" value="MCM_1"/>
    <property type="match status" value="1"/>
</dbReference>
<dbReference type="PROSITE" id="PS50051">
    <property type="entry name" value="MCM_2"/>
    <property type="match status" value="1"/>
</dbReference>
<comment type="function">
    <text evidence="7 8">Acts as a component of the MCM2-7 complex (MCM complex) which is the putative replicative helicase essential for 'once per cell cycle' DNA replication initiation and elongation in eukaryotic cells. Core component of CDC45-MCM-GINS (CMG) helicase, the molecular machine that unwinds template DNA during replication, and around which the replisome is built. The active ATPase sites in the MCM2-7 ring are formed through the interaction surfaces of two neighboring subunits such that a critical structure of a conserved arginine finger motif is provided in trans relative to the ATP-binding site of the Walker A box of the adjacent subunit. The six ATPase active sites, however, are likely to contribute differentially to the complex helicase activity. Once loaded onto DNA, double hexamers can slide on dsDNA in the absence of ATPase activity.</text>
</comment>
<comment type="catalytic activity">
    <reaction evidence="1">
        <text>ATP + H2O = ADP + phosphate + H(+)</text>
        <dbReference type="Rhea" id="RHEA:13065"/>
        <dbReference type="ChEBI" id="CHEBI:15377"/>
        <dbReference type="ChEBI" id="CHEBI:15378"/>
        <dbReference type="ChEBI" id="CHEBI:30616"/>
        <dbReference type="ChEBI" id="CHEBI:43474"/>
        <dbReference type="ChEBI" id="CHEBI:456216"/>
        <dbReference type="EC" id="3.6.4.12"/>
    </reaction>
    <physiologicalReaction direction="left-to-right" evidence="1">
        <dbReference type="Rhea" id="RHEA:13066"/>
    </physiologicalReaction>
</comment>
<comment type="subunit">
    <text evidence="5 7 8 9">Component of the MCM2-7 complex. The complex forms a toroidal hexameric ring with the proposed subunit order MCM2-MCM6-MCM4-MCM7-MCM3-MCM5; loaded onto DNA, forms a head-head double hexamer. Interacts with CSM1 and MCM10.</text>
</comment>
<comment type="interaction">
    <interactant intactId="EBI-4300">
        <id>P38132</id>
    </interactant>
    <interactant intactId="EBI-22001">
        <id>P25651</id>
        <label>CSM1</label>
    </interactant>
    <organismsDiffer>false</organismsDiffer>
    <experiments>3</experiments>
</comment>
<comment type="interaction">
    <interactant intactId="EBI-4300">
        <id>P38132</id>
    </interactant>
    <interactant intactId="EBI-6514">
        <id>P53199</id>
        <label>ERG26</label>
    </interactant>
    <organismsDiffer>false</organismsDiffer>
    <experiments>2</experiments>
</comment>
<comment type="interaction">
    <interactant intactId="EBI-4300">
        <id>P38132</id>
    </interactant>
    <interactant intactId="EBI-10541">
        <id>P24279</id>
        <label>MCM3</label>
    </interactant>
    <organismsDiffer>false</organismsDiffer>
    <experiments>3</experiments>
</comment>
<comment type="interaction">
    <interactant intactId="EBI-4300">
        <id>P38132</id>
    </interactant>
    <interactant intactId="EBI-4326">
        <id>P30665</id>
        <label>MCM4</label>
    </interactant>
    <organismsDiffer>false</organismsDiffer>
    <experiments>4</experiments>
</comment>
<comment type="interaction">
    <interactant intactId="EBI-4300">
        <id>P38132</id>
    </interactant>
    <interactant intactId="EBI-17490">
        <id>Q12306</id>
        <label>SMT3</label>
    </interactant>
    <organismsDiffer>false</organismsDiffer>
    <experiments>2</experiments>
</comment>
<comment type="subcellular location">
    <subcellularLocation>
        <location evidence="3">Cytoplasm</location>
    </subcellularLocation>
    <subcellularLocation>
        <location evidence="3">Nucleus</location>
    </subcellularLocation>
</comment>
<comment type="miscellaneous">
    <text evidence="4">Present with 166 molecules/cell in log phase SD medium.</text>
</comment>
<comment type="miscellaneous">
    <text>Early fractionation of eukaryotic MCM proteins yielded a variety of dimeric, trimeric and tetrameric complexes with unclear biological significance. Specifically a MCM467 subcomplex is shown to have in vitro helicase activity which is inhibited by the MCM2 subunit. The MCM2-7 hexamer is the proposed physiological active complex.</text>
</comment>
<comment type="similarity">
    <text evidence="10">Belongs to the MCM family.</text>
</comment>
<evidence type="ECO:0000250" key="1">
    <source>
        <dbReference type="UniProtKB" id="P33993"/>
    </source>
</evidence>
<evidence type="ECO:0000256" key="2">
    <source>
        <dbReference type="SAM" id="MobiDB-lite"/>
    </source>
</evidence>
<evidence type="ECO:0000269" key="3">
    <source>
    </source>
</evidence>
<evidence type="ECO:0000269" key="4">
    <source>
    </source>
</evidence>
<evidence type="ECO:0000269" key="5">
    <source>
    </source>
</evidence>
<evidence type="ECO:0000269" key="6">
    <source>
    </source>
</evidence>
<evidence type="ECO:0000269" key="7">
    <source>
    </source>
</evidence>
<evidence type="ECO:0000269" key="8">
    <source>
    </source>
</evidence>
<evidence type="ECO:0000269" key="9">
    <source>
    </source>
</evidence>
<evidence type="ECO:0000305" key="10"/>
<evidence type="ECO:0007744" key="11">
    <source>
    </source>
</evidence>
<evidence type="ECO:0007744" key="12">
    <source>
    </source>
</evidence>
<evidence type="ECO:0007744" key="13">
    <source>
    </source>
</evidence>
<evidence type="ECO:0007829" key="14">
    <source>
        <dbReference type="PDB" id="6SKO"/>
    </source>
</evidence>
<evidence type="ECO:0007829" key="15">
    <source>
        <dbReference type="PDB" id="7PMK"/>
    </source>
</evidence>
<proteinExistence type="evidence at protein level"/>
<accession>P38132</accession>
<accession>D6VQK0</accession>
<sequence>MSAALPSIQLPVDYNNLFNEITDFLVTFKQDTLSSDATRNENEDENLDAENIEQHLLEKGPKYMAMLQKVANRELNSVIIDLDDILQYQNEKFLQGTQADDLVSAIQQNANHFTELFCRAIDNNMPLPTKEIDYKDDVLDVILNQRRLRNERMLSDRTNEIRSENLMDTTMDPPSSMNDALREVVEDETELFPPNLTRRYFLYFKPLSQNCARRYRKKAISSKPLSVRQIKGDFLGQLITVRGIITRVSDVKPAVEVIAYTCDQCGYEVFQEVNSRTFTPLSECTSEECSQNQTKGQLFMSTRASKFSAFQECKIQELSQQVPVGHIPRSLNIHVNGTLVRSLSPGDIVDVTGIFLPAPYTGFKALKAGLLTETYLEAQFVRQHKKKFASFSLTSDVEERVMELITSGDVYNRLAKSIAPEIYGNLDVKKALLLLLVGGVDKRVGDGMKIRGDINVCLMGDPGVAKSQLLKAICKISPRGVYTTGKGSSGVGLTAAVMKDPVTDEMILEGGALVLADNGICCIDEFDKMDESDRTAIHEVMEQQTISISKAGINTTLNARTSILAAANPLYGRYNPRLSPLDNINLPAALLSRFDILFLMLDIPSRDDDEKLAEHVTYVHMHNKQPDLDFTPVEPSKMREYIAYAKTKRPVMSEAVNDYVVQAYIRLRQDSKREMDSKFSFGQATPRTLLGIIRLSQALAKLRLADMVDIDDVEEALRLVRVSKESLYQETNKSKEDESPTTKIFTIIKKMLQETGKNTLSYENIVKTVRLRGFTMLQLSNCIQEYSYLNVWHLINEGNTLKFVDDGTMDTDQEDSLVSTPKLAPQTTASANVSAQDSDIDLQDA</sequence>
<organism>
    <name type="scientific">Saccharomyces cerevisiae (strain ATCC 204508 / S288c)</name>
    <name type="common">Baker's yeast</name>
    <dbReference type="NCBI Taxonomy" id="559292"/>
    <lineage>
        <taxon>Eukaryota</taxon>
        <taxon>Fungi</taxon>
        <taxon>Dikarya</taxon>
        <taxon>Ascomycota</taxon>
        <taxon>Saccharomycotina</taxon>
        <taxon>Saccharomycetes</taxon>
        <taxon>Saccharomycetales</taxon>
        <taxon>Saccharomycetaceae</taxon>
        <taxon>Saccharomyces</taxon>
    </lineage>
</organism>
<name>MCM7_YEAST</name>
<feature type="chain" id="PRO_0000194124" description="DNA replication licensing factor MCM7">
    <location>
        <begin position="1"/>
        <end position="845"/>
    </location>
</feature>
<feature type="domain" description="MCM">
    <location>
        <begin position="410"/>
        <end position="617"/>
    </location>
</feature>
<feature type="region of interest" description="Disordered" evidence="2">
    <location>
        <begin position="812"/>
        <end position="845"/>
    </location>
</feature>
<feature type="short sequence motif" description="Arginine finger">
    <location>
        <begin position="592"/>
        <end position="595"/>
    </location>
</feature>
<feature type="compositionally biased region" description="Polar residues" evidence="2">
    <location>
        <begin position="825"/>
        <end position="837"/>
    </location>
</feature>
<feature type="binding site" evidence="1">
    <location>
        <position position="423"/>
    </location>
    <ligand>
        <name>ATP</name>
        <dbReference type="ChEBI" id="CHEBI:30616"/>
        <label>1</label>
        <note>ligand shared with MCM3</note>
    </ligand>
</feature>
<feature type="binding site" evidence="1">
    <location>
        <position position="463"/>
    </location>
    <ligand>
        <name>ATP</name>
        <dbReference type="ChEBI" id="CHEBI:30616"/>
        <label>1</label>
        <note>ligand shared with MCM3</note>
    </ligand>
</feature>
<feature type="binding site" evidence="1">
    <location>
        <position position="465"/>
    </location>
    <ligand>
        <name>ATP</name>
        <dbReference type="ChEBI" id="CHEBI:30616"/>
        <label>1</label>
        <note>ligand shared with MCM3</note>
    </ligand>
</feature>
<feature type="binding site" evidence="1">
    <location>
        <position position="466"/>
    </location>
    <ligand>
        <name>ATP</name>
        <dbReference type="ChEBI" id="CHEBI:30616"/>
        <label>1</label>
        <note>ligand shared with MCM3</note>
    </ligand>
</feature>
<feature type="binding site" evidence="1">
    <location>
        <position position="467"/>
    </location>
    <ligand>
        <name>ATP</name>
        <dbReference type="ChEBI" id="CHEBI:30616"/>
        <label>1</label>
        <note>ligand shared with MCM3</note>
    </ligand>
</feature>
<feature type="binding site" evidence="1">
    <location>
        <position position="568"/>
    </location>
    <ligand>
        <name>ATP</name>
        <dbReference type="ChEBI" id="CHEBI:30616"/>
        <label>1</label>
        <note>ligand shared with MCM3</note>
    </ligand>
</feature>
<feature type="binding site" evidence="1">
    <location>
        <position position="593"/>
    </location>
    <ligand>
        <name>ATP</name>
        <dbReference type="ChEBI" id="CHEBI:30616"/>
        <label>2</label>
        <note>ligand shared with MCM4</note>
    </ligand>
</feature>
<feature type="binding site" evidence="1">
    <location>
        <position position="687"/>
    </location>
    <ligand>
        <name>ATP</name>
        <dbReference type="ChEBI" id="CHEBI:30616"/>
        <label>2</label>
        <note>ligand shared with MCM4</note>
    </ligand>
</feature>
<feature type="modified residue" description="Phosphothreonine" evidence="11 12">
    <location>
        <position position="811"/>
    </location>
</feature>
<feature type="modified residue" description="Phosphoserine" evidence="12">
    <location>
        <position position="819"/>
    </location>
</feature>
<feature type="modified residue" description="Phosphoserine" evidence="13">
    <location>
        <position position="838"/>
    </location>
</feature>
<feature type="mutagenesis site" description="Loss of MCM2-7 complex helicase activity." evidence="6">
    <original>K</original>
    <variation>A</variation>
    <location>
        <position position="466"/>
    </location>
</feature>
<feature type="sequence conflict" description="In Ref. 2; CAA79689 and 3; CAA85166." evidence="10" ref="2 3">
    <original>G</original>
    <variation>V</variation>
    <location>
        <position position="552"/>
    </location>
</feature>
<feature type="sequence conflict" description="In Ref. 2; CAA79689 and 3; CAA85166." evidence="10" ref="2 3">
    <original>TLN</original>
    <variation>NPG</variation>
    <location>
        <begin position="556"/>
        <end position="558"/>
    </location>
</feature>
<feature type="sequence conflict" description="In Ref. 2; CAA79689 and 3; CAA85166." evidence="10" ref="2 3">
    <original>Y</original>
    <variation>I</variation>
    <location>
        <position position="574"/>
    </location>
</feature>
<feature type="helix" evidence="15">
    <location>
        <begin position="14"/>
        <end position="27"/>
    </location>
</feature>
<feature type="helix" evidence="15">
    <location>
        <begin position="31"/>
        <end position="33"/>
    </location>
</feature>
<feature type="helix" evidence="15">
    <location>
        <begin position="62"/>
        <end position="71"/>
    </location>
</feature>
<feature type="strand" evidence="15">
    <location>
        <begin position="77"/>
        <end position="81"/>
    </location>
</feature>
<feature type="helix" evidence="15">
    <location>
        <begin position="82"/>
        <end position="94"/>
    </location>
</feature>
<feature type="helix" evidence="15">
    <location>
        <begin position="102"/>
        <end position="108"/>
    </location>
</feature>
<feature type="helix" evidence="15">
    <location>
        <begin position="110"/>
        <end position="124"/>
    </location>
</feature>
<feature type="helix" evidence="15">
    <location>
        <begin position="134"/>
        <end position="136"/>
    </location>
</feature>
<feature type="helix" evidence="15">
    <location>
        <begin position="138"/>
        <end position="154"/>
    </location>
</feature>
<feature type="helix" evidence="15">
    <location>
        <begin position="194"/>
        <end position="197"/>
    </location>
</feature>
<feature type="strand" evidence="15">
    <location>
        <begin position="200"/>
        <end position="205"/>
    </location>
</feature>
<feature type="turn" evidence="15">
    <location>
        <begin position="220"/>
        <end position="222"/>
    </location>
</feature>
<feature type="strand" evidence="15">
    <location>
        <begin position="223"/>
        <end position="225"/>
    </location>
</feature>
<feature type="helix" evidence="15">
    <location>
        <begin position="227"/>
        <end position="229"/>
    </location>
</feature>
<feature type="helix" evidence="15">
    <location>
        <begin position="232"/>
        <end position="234"/>
    </location>
</feature>
<feature type="strand" evidence="15">
    <location>
        <begin position="237"/>
        <end position="248"/>
    </location>
</feature>
<feature type="strand" evidence="15">
    <location>
        <begin position="252"/>
        <end position="262"/>
    </location>
</feature>
<feature type="turn" evidence="15">
    <location>
        <begin position="263"/>
        <end position="265"/>
    </location>
</feature>
<feature type="strand" evidence="15">
    <location>
        <begin position="269"/>
        <end position="272"/>
    </location>
</feature>
<feature type="strand" evidence="15">
    <location>
        <begin position="275"/>
        <end position="278"/>
    </location>
</feature>
<feature type="helix" evidence="15">
    <location>
        <begin position="287"/>
        <end position="290"/>
    </location>
</feature>
<feature type="turn" evidence="15">
    <location>
        <begin position="291"/>
        <end position="293"/>
    </location>
</feature>
<feature type="strand" evidence="15">
    <location>
        <begin position="297"/>
        <end position="316"/>
    </location>
</feature>
<feature type="turn" evidence="15">
    <location>
        <begin position="319"/>
        <end position="321"/>
    </location>
</feature>
<feature type="strand" evidence="15">
    <location>
        <begin position="330"/>
        <end position="336"/>
    </location>
</feature>
<feature type="helix" evidence="15">
    <location>
        <begin position="337"/>
        <end position="339"/>
    </location>
</feature>
<feature type="strand" evidence="15">
    <location>
        <begin position="348"/>
        <end position="358"/>
    </location>
</feature>
<feature type="strand" evidence="15">
    <location>
        <begin position="373"/>
        <end position="383"/>
    </location>
</feature>
<feature type="helix" evidence="15">
    <location>
        <begin position="397"/>
        <end position="407"/>
    </location>
</feature>
<feature type="helix" evidence="15">
    <location>
        <begin position="410"/>
        <end position="416"/>
    </location>
</feature>
<feature type="helix" evidence="15">
    <location>
        <begin position="426"/>
        <end position="437"/>
    </location>
</feature>
<feature type="strand" evidence="15">
    <location>
        <begin position="456"/>
        <end position="460"/>
    </location>
</feature>
<feature type="helix" evidence="15">
    <location>
        <begin position="462"/>
        <end position="464"/>
    </location>
</feature>
<feature type="helix" evidence="15">
    <location>
        <begin position="467"/>
        <end position="476"/>
    </location>
</feature>
<feature type="strand" evidence="15">
    <location>
        <begin position="477"/>
        <end position="479"/>
    </location>
</feature>
<feature type="strand" evidence="15">
    <location>
        <begin position="481"/>
        <end position="484"/>
    </location>
</feature>
<feature type="helix" evidence="14">
    <location>
        <begin position="490"/>
        <end position="494"/>
    </location>
</feature>
<feature type="strand" evidence="14">
    <location>
        <begin position="495"/>
        <end position="499"/>
    </location>
</feature>
<feature type="strand" evidence="15">
    <location>
        <begin position="501"/>
        <end position="504"/>
    </location>
</feature>
<feature type="strand" evidence="14">
    <location>
        <begin position="507"/>
        <end position="510"/>
    </location>
</feature>
<feature type="helix" evidence="15">
    <location>
        <begin position="512"/>
        <end position="515"/>
    </location>
</feature>
<feature type="turn" evidence="15">
    <location>
        <begin position="516"/>
        <end position="518"/>
    </location>
</feature>
<feature type="strand" evidence="15">
    <location>
        <begin position="519"/>
        <end position="524"/>
    </location>
</feature>
<feature type="helix" evidence="15">
    <location>
        <begin position="526"/>
        <end position="528"/>
    </location>
</feature>
<feature type="helix" evidence="15">
    <location>
        <begin position="531"/>
        <end position="543"/>
    </location>
</feature>
<feature type="strand" evidence="15">
    <location>
        <begin position="544"/>
        <end position="550"/>
    </location>
</feature>
<feature type="strand" evidence="15">
    <location>
        <begin position="553"/>
        <end position="558"/>
    </location>
</feature>
<feature type="strand" evidence="15">
    <location>
        <begin position="561"/>
        <end position="566"/>
    </location>
</feature>
<feature type="helix" evidence="15">
    <location>
        <begin position="580"/>
        <end position="583"/>
    </location>
</feature>
<feature type="strand" evidence="15">
    <location>
        <begin position="584"/>
        <end position="586"/>
    </location>
</feature>
<feature type="helix" evidence="15">
    <location>
        <begin position="588"/>
        <end position="591"/>
    </location>
</feature>
<feature type="strand" evidence="15">
    <location>
        <begin position="595"/>
        <end position="599"/>
    </location>
</feature>
<feature type="helix" evidence="15">
    <location>
        <begin position="608"/>
        <end position="622"/>
    </location>
</feature>
<feature type="helix" evidence="15">
    <location>
        <begin position="635"/>
        <end position="647"/>
    </location>
</feature>
<feature type="helix" evidence="15">
    <location>
        <begin position="654"/>
        <end position="671"/>
    </location>
</feature>
<feature type="helix" evidence="14">
    <location>
        <begin position="677"/>
        <end position="679"/>
    </location>
</feature>
<feature type="helix" evidence="15">
    <location>
        <begin position="686"/>
        <end position="702"/>
    </location>
</feature>
<feature type="helix" evidence="15">
    <location>
        <begin position="710"/>
        <end position="726"/>
    </location>
</feature>